<organism>
    <name type="scientific">Haemophilus influenzae (strain 86-028NP)</name>
    <dbReference type="NCBI Taxonomy" id="281310"/>
    <lineage>
        <taxon>Bacteria</taxon>
        <taxon>Pseudomonadati</taxon>
        <taxon>Pseudomonadota</taxon>
        <taxon>Gammaproteobacteria</taxon>
        <taxon>Pasteurellales</taxon>
        <taxon>Pasteurellaceae</taxon>
        <taxon>Haemophilus</taxon>
    </lineage>
</organism>
<protein>
    <recommendedName>
        <fullName evidence="1">Na(+)/H(+) antiporter NhaA</fullName>
    </recommendedName>
    <alternativeName>
        <fullName evidence="1">Sodium/proton antiporter NhaA</fullName>
    </alternativeName>
</protein>
<name>NHAA_HAEI8</name>
<evidence type="ECO:0000255" key="1">
    <source>
        <dbReference type="HAMAP-Rule" id="MF_01844"/>
    </source>
</evidence>
<reference key="1">
    <citation type="journal article" date="2005" name="J. Bacteriol.">
        <title>Genomic sequence of an otitis media isolate of nontypeable Haemophilus influenzae: comparative study with H. influenzae serotype d, strain KW20.</title>
        <authorList>
            <person name="Harrison A."/>
            <person name="Dyer D.W."/>
            <person name="Gillaspy A."/>
            <person name="Ray W.C."/>
            <person name="Mungur R."/>
            <person name="Carson M.B."/>
            <person name="Zhong H."/>
            <person name="Gipson J."/>
            <person name="Gipson M."/>
            <person name="Johnson L.S."/>
            <person name="Lewis L."/>
            <person name="Bakaletz L.O."/>
            <person name="Munson R.S. Jr."/>
        </authorList>
    </citation>
    <scope>NUCLEOTIDE SEQUENCE [LARGE SCALE GENOMIC DNA]</scope>
    <source>
        <strain>86-028NP</strain>
    </source>
</reference>
<proteinExistence type="inferred from homology"/>
<accession>Q4QNW1</accession>
<feature type="chain" id="PRO_0000334313" description="Na(+)/H(+) antiporter NhaA">
    <location>
        <begin position="1"/>
        <end position="400"/>
    </location>
</feature>
<feature type="transmembrane region" description="Helical" evidence="1">
    <location>
        <begin position="26"/>
        <end position="46"/>
    </location>
</feature>
<feature type="transmembrane region" description="Helical" evidence="1">
    <location>
        <begin position="71"/>
        <end position="91"/>
    </location>
</feature>
<feature type="transmembrane region" description="Helical" evidence="1">
    <location>
        <begin position="107"/>
        <end position="127"/>
    </location>
</feature>
<feature type="transmembrane region" description="Helical" evidence="1">
    <location>
        <begin position="137"/>
        <end position="157"/>
    </location>
</feature>
<feature type="transmembrane region" description="Helical" evidence="1">
    <location>
        <begin position="166"/>
        <end position="186"/>
    </location>
</feature>
<feature type="transmembrane region" description="Helical" evidence="1">
    <location>
        <begin position="189"/>
        <end position="209"/>
    </location>
</feature>
<feature type="transmembrane region" description="Helical" evidence="1">
    <location>
        <begin position="212"/>
        <end position="232"/>
    </location>
</feature>
<feature type="transmembrane region" description="Helical" evidence="1">
    <location>
        <begin position="233"/>
        <end position="253"/>
    </location>
</feature>
<feature type="transmembrane region" description="Helical" evidence="1">
    <location>
        <begin position="273"/>
        <end position="293"/>
    </location>
</feature>
<feature type="transmembrane region" description="Helical" evidence="1">
    <location>
        <begin position="299"/>
        <end position="319"/>
    </location>
</feature>
<feature type="transmembrane region" description="Helical" evidence="1">
    <location>
        <begin position="340"/>
        <end position="360"/>
    </location>
</feature>
<feature type="transmembrane region" description="Helical" evidence="1">
    <location>
        <begin position="373"/>
        <end position="393"/>
    </location>
</feature>
<dbReference type="EMBL" id="CP000057">
    <property type="protein sequence ID" value="AAX87286.1"/>
    <property type="molecule type" value="Genomic_DNA"/>
</dbReference>
<dbReference type="RefSeq" id="WP_005660593.1">
    <property type="nucleotide sequence ID" value="NC_007146.2"/>
</dbReference>
<dbReference type="SMR" id="Q4QNW1"/>
<dbReference type="GeneID" id="93219168"/>
<dbReference type="KEGG" id="hit:NTHI0329"/>
<dbReference type="HOGENOM" id="CLU_015803_1_0_6"/>
<dbReference type="Proteomes" id="UP000002525">
    <property type="component" value="Chromosome"/>
</dbReference>
<dbReference type="GO" id="GO:0005886">
    <property type="term" value="C:plasma membrane"/>
    <property type="evidence" value="ECO:0007669"/>
    <property type="project" value="UniProtKB-SubCell"/>
</dbReference>
<dbReference type="GO" id="GO:0015385">
    <property type="term" value="F:sodium:proton antiporter activity"/>
    <property type="evidence" value="ECO:0007669"/>
    <property type="project" value="TreeGrafter"/>
</dbReference>
<dbReference type="GO" id="GO:0006885">
    <property type="term" value="P:regulation of pH"/>
    <property type="evidence" value="ECO:0007669"/>
    <property type="project" value="InterPro"/>
</dbReference>
<dbReference type="Gene3D" id="1.20.1530.10">
    <property type="entry name" value="Na+/H+ antiporter like domain"/>
    <property type="match status" value="1"/>
</dbReference>
<dbReference type="HAMAP" id="MF_01844">
    <property type="entry name" value="NhaA"/>
    <property type="match status" value="1"/>
</dbReference>
<dbReference type="InterPro" id="IPR023171">
    <property type="entry name" value="Na/H_antiporter_dom_sf"/>
</dbReference>
<dbReference type="InterPro" id="IPR004670">
    <property type="entry name" value="NhaA"/>
</dbReference>
<dbReference type="NCBIfam" id="TIGR00773">
    <property type="entry name" value="NhaA"/>
    <property type="match status" value="1"/>
</dbReference>
<dbReference type="NCBIfam" id="NF007111">
    <property type="entry name" value="PRK09560.1"/>
    <property type="match status" value="1"/>
</dbReference>
<dbReference type="NCBIfam" id="NF007112">
    <property type="entry name" value="PRK09561.1"/>
    <property type="match status" value="1"/>
</dbReference>
<dbReference type="PANTHER" id="PTHR30341:SF0">
    <property type="entry name" value="NA(+)_H(+) ANTIPORTER NHAA"/>
    <property type="match status" value="1"/>
</dbReference>
<dbReference type="PANTHER" id="PTHR30341">
    <property type="entry name" value="SODIUM ION/PROTON ANTIPORTER NHAA-RELATED"/>
    <property type="match status" value="1"/>
</dbReference>
<dbReference type="Pfam" id="PF06965">
    <property type="entry name" value="Na_H_antiport_1"/>
    <property type="match status" value="1"/>
</dbReference>
<gene>
    <name evidence="1" type="primary">nhaA</name>
    <name type="ordered locus">NTHI0329</name>
</gene>
<comment type="function">
    <text evidence="1">Na(+)/H(+) antiporter that extrudes sodium in exchange for external protons.</text>
</comment>
<comment type="catalytic activity">
    <reaction evidence="1">
        <text>Na(+)(in) + 2 H(+)(out) = Na(+)(out) + 2 H(+)(in)</text>
        <dbReference type="Rhea" id="RHEA:29251"/>
        <dbReference type="ChEBI" id="CHEBI:15378"/>
        <dbReference type="ChEBI" id="CHEBI:29101"/>
    </reaction>
    <physiologicalReaction direction="left-to-right" evidence="1">
        <dbReference type="Rhea" id="RHEA:29252"/>
    </physiologicalReaction>
</comment>
<comment type="subcellular location">
    <subcellularLocation>
        <location evidence="1">Cell inner membrane</location>
        <topology evidence="1">Multi-pass membrane protein</topology>
    </subcellularLocation>
</comment>
<comment type="similarity">
    <text evidence="1">Belongs to the NhaA Na(+)/H(+) (TC 2.A.33) antiporter family.</text>
</comment>
<keyword id="KW-0050">Antiport</keyword>
<keyword id="KW-0997">Cell inner membrane</keyword>
<keyword id="KW-1003">Cell membrane</keyword>
<keyword id="KW-0406">Ion transport</keyword>
<keyword id="KW-0472">Membrane</keyword>
<keyword id="KW-0915">Sodium</keyword>
<keyword id="KW-0739">Sodium transport</keyword>
<keyword id="KW-0812">Transmembrane</keyword>
<keyword id="KW-1133">Transmembrane helix</keyword>
<keyword id="KW-0813">Transport</keyword>
<sequence length="400" mass="42724">MNFLLCIFKGVYVIKLIQRFFKLESAGGILLLFSAVVAMLLANSPLSNQYNDFLNLPVSLQIGSFSINKTLIHWINDGFMAVFFVLVGMEVKKELFEGALSTYQQAIFPAIAAIGGMVIPAVVYWFIAKQDPSLANGWAIPMATDIAFALGIMALLSKQVPLPLKIFLLALAIIDDLGAIVVIALFFSHGLSVQALIFSAVAIIVLILLNRFKVSALCAYMVVGAILWASVLKSGVHATLAGVIIGFSIPLKGKKGERPLDDFEHILSSWSSFVILPLFAFANAGVSFAGIDVNMISSPLLLAIASGLIIGKPVGIFGFSYLSVKLGLAKLPDGINFKQIFAVAVLCGIGFTMSMFLASLAFDANAGESVNTLSRLGILLGSTVSAILGYLFLKQTTKLS</sequence>